<sequence length="574" mass="62348">MAAASSVLRCCLLVAALMTLSAMGAEAITRQYLFDVQTTSVTRLCSTKSIVTVNGQYPGPTLFAREGDHVEVTVVNHSPYNMSIHWHGIRQLLSGWADGPSYITQCPIQPGGSYVYRFTITGQRGTLWWHAHISWLRATVHGPMVILPPAGVGYPFPAPHEEVPIMFGEWWNNDTEAVISQALQTGGGPNISDAYTLNGLPGPLYNCSAQDTFKLKVKPGKTYMLRLINAALNDELFFSIANHTLTVVDVDALYVKPFTVDTLIIAPGQTSNVLLTAKPTYPGASYYMLARPYTTTQGTFDNTTVAGVLEYDDPCPTTAAGKIVPIFSPTLPQINDTNAVSNFTAKLRSLASAGYPAAVPQQVDHRFFFTVGLGTHPCAVNGTCQGPNGSRFAASINNVSFVLPATALLQSHFAGKSKGVYASNFPYYPLNPFNYTGTPPNNTNVMNGTKVLVLPYGANVELVMQDTSILGAESHPLHLHGFNFFVVGQGFGNFDPINDPAKFNLYDPVERNTVGVPAGGWVAIRFHADNPGVWFMHCHLEVHMSWGLKMAWLVLDGSRPDQKLPPPPLDLPKC</sequence>
<comment type="function">
    <text evidence="1">Lignin degradation and detoxification of lignin-derived products.</text>
</comment>
<comment type="catalytic activity">
    <reaction>
        <text>4 hydroquinone + O2 = 4 benzosemiquinone + 2 H2O</text>
        <dbReference type="Rhea" id="RHEA:11276"/>
        <dbReference type="ChEBI" id="CHEBI:15377"/>
        <dbReference type="ChEBI" id="CHEBI:15379"/>
        <dbReference type="ChEBI" id="CHEBI:17594"/>
        <dbReference type="ChEBI" id="CHEBI:17977"/>
        <dbReference type="EC" id="1.10.3.2"/>
    </reaction>
</comment>
<comment type="cofactor">
    <cofactor evidence="1">
        <name>Cu cation</name>
        <dbReference type="ChEBI" id="CHEBI:23378"/>
    </cofactor>
    <text evidence="1">Binds 4 Cu cations per monomer.</text>
</comment>
<comment type="subcellular location">
    <subcellularLocation>
        <location evidence="3">Secreted</location>
        <location evidence="3">Extracellular space</location>
        <location evidence="3">Apoplast</location>
    </subcellularLocation>
</comment>
<comment type="similarity">
    <text evidence="3">Belongs to the multicopper oxidase family.</text>
</comment>
<comment type="sequence caution" evidence="3">
    <conflict type="erroneous gene model prediction">
        <sequence resource="EMBL-CDS" id="AAU44019"/>
    </conflict>
</comment>
<comment type="sequence caution" evidence="3">
    <conflict type="frameshift">
        <sequence resource="EMBL" id="AK068047"/>
    </conflict>
</comment>
<proteinExistence type="evidence at transcript level"/>
<gene>
    <name type="primary">LAC13</name>
    <name type="ordered locus">Os05g0458600</name>
    <name type="ordered locus">LOC_Os05g38420</name>
    <name type="ORF">OJ1362_D02.10</name>
</gene>
<accession>P0DKK6</accession>
<accession>A0A0P0WND9</accession>
<accession>Q0DHL2</accession>
<accession>Q0DHL3</accession>
<accession>Q65XF7</accession>
<reference key="1">
    <citation type="journal article" date="2005" name="Mol. Genet. Genomics">
        <title>A fine physical map of the rice chromosome 5.</title>
        <authorList>
            <person name="Cheng C.-H."/>
            <person name="Chung M.C."/>
            <person name="Liu S.-M."/>
            <person name="Chen S.-K."/>
            <person name="Kao F.Y."/>
            <person name="Lin S.-J."/>
            <person name="Hsiao S.-H."/>
            <person name="Tseng I.C."/>
            <person name="Hsing Y.-I.C."/>
            <person name="Wu H.-P."/>
            <person name="Chen C.-S."/>
            <person name="Shaw J.-F."/>
            <person name="Wu J."/>
            <person name="Matsumoto T."/>
            <person name="Sasaki T."/>
            <person name="Chen H.-C."/>
            <person name="Chow T.-Y."/>
        </authorList>
    </citation>
    <scope>NUCLEOTIDE SEQUENCE [LARGE SCALE GENOMIC DNA] (OS05G0458500 AND OS05G0458600)</scope>
    <source>
        <strain>cv. Nipponbare</strain>
    </source>
</reference>
<reference key="2">
    <citation type="journal article" date="2005" name="Nature">
        <title>The map-based sequence of the rice genome.</title>
        <authorList>
            <consortium name="International rice genome sequencing project (IRGSP)"/>
        </authorList>
    </citation>
    <scope>NUCLEOTIDE SEQUENCE [LARGE SCALE GENOMIC DNA] (OS05G0458500 AND OS05G0458600)</scope>
    <source>
        <strain>cv. Nipponbare</strain>
    </source>
</reference>
<reference key="3">
    <citation type="journal article" date="2008" name="Nucleic Acids Res.">
        <title>The rice annotation project database (RAP-DB): 2008 update.</title>
        <authorList>
            <consortium name="The rice annotation project (RAP)"/>
        </authorList>
    </citation>
    <scope>GENOME REANNOTATION</scope>
    <source>
        <strain>cv. Nipponbare</strain>
    </source>
</reference>
<reference key="4">
    <citation type="journal article" date="2013" name="Rice">
        <title>Improvement of the Oryza sativa Nipponbare reference genome using next generation sequence and optical map data.</title>
        <authorList>
            <person name="Kawahara Y."/>
            <person name="de la Bastide M."/>
            <person name="Hamilton J.P."/>
            <person name="Kanamori H."/>
            <person name="McCombie W.R."/>
            <person name="Ouyang S."/>
            <person name="Schwartz D.C."/>
            <person name="Tanaka T."/>
            <person name="Wu J."/>
            <person name="Zhou S."/>
            <person name="Childs K.L."/>
            <person name="Davidson R.M."/>
            <person name="Lin H."/>
            <person name="Quesada-Ocampo L."/>
            <person name="Vaillancourt B."/>
            <person name="Sakai H."/>
            <person name="Lee S.S."/>
            <person name="Kim J."/>
            <person name="Numa H."/>
            <person name="Itoh T."/>
            <person name="Buell C.R."/>
            <person name="Matsumoto T."/>
        </authorList>
    </citation>
    <scope>GENOME REANNOTATION</scope>
    <source>
        <strain>cv. Nipponbare</strain>
    </source>
</reference>
<reference key="5">
    <citation type="journal article" date="2003" name="Science">
        <title>Collection, mapping, and annotation of over 28,000 cDNA clones from japonica rice.</title>
        <authorList>
            <consortium name="The rice full-length cDNA consortium"/>
        </authorList>
    </citation>
    <scope>NUCLEOTIDE SEQUENCE [LARGE SCALE MRNA] (OS05G0458600)</scope>
    <source>
        <strain>cv. Nipponbare</strain>
    </source>
</reference>
<keyword id="KW-0052">Apoplast</keyword>
<keyword id="KW-0186">Copper</keyword>
<keyword id="KW-0325">Glycoprotein</keyword>
<keyword id="KW-0439">Lignin degradation</keyword>
<keyword id="KW-0479">Metal-binding</keyword>
<keyword id="KW-0560">Oxidoreductase</keyword>
<keyword id="KW-1185">Reference proteome</keyword>
<keyword id="KW-0677">Repeat</keyword>
<keyword id="KW-0964">Secreted</keyword>
<keyword id="KW-0732">Signal</keyword>
<name>LAC13_ORYSJ</name>
<feature type="signal peptide" evidence="2">
    <location>
        <begin position="1"/>
        <end position="27"/>
    </location>
</feature>
<feature type="chain" id="PRO_0000436228" description="Laccase-13">
    <location>
        <begin position="28"/>
        <end position="574"/>
    </location>
</feature>
<feature type="domain" description="Plastocyanin-like 1">
    <location>
        <begin position="35"/>
        <end position="151"/>
    </location>
</feature>
<feature type="domain" description="Plastocyanin-like 2">
    <location>
        <begin position="161"/>
        <end position="314"/>
    </location>
</feature>
<feature type="domain" description="Plastocyanin-like 3">
    <location>
        <begin position="424"/>
        <end position="558"/>
    </location>
</feature>
<feature type="binding site" evidence="1">
    <location>
        <position position="85"/>
    </location>
    <ligand>
        <name>Cu cation</name>
        <dbReference type="ChEBI" id="CHEBI:23378"/>
        <label>1</label>
    </ligand>
</feature>
<feature type="binding site" evidence="1">
    <location>
        <position position="87"/>
    </location>
    <ligand>
        <name>Cu cation</name>
        <dbReference type="ChEBI" id="CHEBI:23378"/>
        <label>2</label>
    </ligand>
</feature>
<feature type="binding site" evidence="1">
    <location>
        <position position="130"/>
    </location>
    <ligand>
        <name>Cu cation</name>
        <dbReference type="ChEBI" id="CHEBI:23378"/>
        <label>2</label>
    </ligand>
</feature>
<feature type="binding site" evidence="1">
    <location>
        <position position="132"/>
    </location>
    <ligand>
        <name>Cu cation</name>
        <dbReference type="ChEBI" id="CHEBI:23378"/>
        <label>3</label>
    </ligand>
</feature>
<feature type="binding site" evidence="1">
    <location>
        <position position="475"/>
    </location>
    <ligand>
        <name>Cu cation</name>
        <dbReference type="ChEBI" id="CHEBI:23378"/>
        <label>4</label>
    </ligand>
</feature>
<feature type="binding site" evidence="1">
    <location>
        <position position="478"/>
    </location>
    <ligand>
        <name>Cu cation</name>
        <dbReference type="ChEBI" id="CHEBI:23378"/>
        <label>1</label>
    </ligand>
</feature>
<feature type="binding site" evidence="1">
    <location>
        <position position="480"/>
    </location>
    <ligand>
        <name>Cu cation</name>
        <dbReference type="ChEBI" id="CHEBI:23378"/>
        <label>3</label>
    </ligand>
</feature>
<feature type="binding site" evidence="1">
    <location>
        <position position="537"/>
    </location>
    <ligand>
        <name>Cu cation</name>
        <dbReference type="ChEBI" id="CHEBI:23378"/>
        <label>3</label>
    </ligand>
</feature>
<feature type="binding site" evidence="1">
    <location>
        <position position="538"/>
    </location>
    <ligand>
        <name>Cu cation</name>
        <dbReference type="ChEBI" id="CHEBI:23378"/>
        <label>4</label>
    </ligand>
</feature>
<feature type="binding site" evidence="1">
    <location>
        <position position="539"/>
    </location>
    <ligand>
        <name>Cu cation</name>
        <dbReference type="ChEBI" id="CHEBI:23378"/>
        <label>2</label>
    </ligand>
</feature>
<feature type="binding site" evidence="1">
    <location>
        <position position="543"/>
    </location>
    <ligand>
        <name>Cu cation</name>
        <dbReference type="ChEBI" id="CHEBI:23378"/>
        <label>4</label>
    </ligand>
</feature>
<feature type="glycosylation site" description="N-linked (GlcNAc...) asparagine" evidence="2">
    <location>
        <position position="81"/>
    </location>
</feature>
<feature type="glycosylation site" description="N-linked (GlcNAc...) asparagine" evidence="2">
    <location>
        <position position="173"/>
    </location>
</feature>
<feature type="glycosylation site" description="N-linked (GlcNAc...) asparagine" evidence="2">
    <location>
        <position position="190"/>
    </location>
</feature>
<feature type="glycosylation site" description="N-linked (GlcNAc...) asparagine" evidence="2">
    <location>
        <position position="206"/>
    </location>
</feature>
<feature type="glycosylation site" description="N-linked (GlcNAc...) asparagine" evidence="2">
    <location>
        <position position="242"/>
    </location>
</feature>
<feature type="glycosylation site" description="N-linked (GlcNAc...) asparagine" evidence="2">
    <location>
        <position position="302"/>
    </location>
</feature>
<feature type="glycosylation site" description="N-linked (GlcNAc...) asparagine" evidence="2">
    <location>
        <position position="335"/>
    </location>
</feature>
<feature type="glycosylation site" description="N-linked (GlcNAc...) asparagine" evidence="2">
    <location>
        <position position="342"/>
    </location>
</feature>
<feature type="glycosylation site" description="N-linked (GlcNAc...) asparagine" evidence="2">
    <location>
        <position position="381"/>
    </location>
</feature>
<feature type="glycosylation site" description="N-linked (GlcNAc...) asparagine" evidence="2">
    <location>
        <position position="388"/>
    </location>
</feature>
<feature type="glycosylation site" description="N-linked (GlcNAc...) asparagine" evidence="2">
    <location>
        <position position="398"/>
    </location>
</feature>
<feature type="glycosylation site" description="N-linked (GlcNAc...) asparagine" evidence="2">
    <location>
        <position position="434"/>
    </location>
</feature>
<feature type="glycosylation site" description="N-linked (GlcNAc...) asparagine" evidence="2">
    <location>
        <position position="441"/>
    </location>
</feature>
<feature type="glycosylation site" description="N-linked (GlcNAc...) asparagine" evidence="2">
    <location>
        <position position="447"/>
    </location>
</feature>
<organism>
    <name type="scientific">Oryza sativa subsp. japonica</name>
    <name type="common">Rice</name>
    <dbReference type="NCBI Taxonomy" id="39947"/>
    <lineage>
        <taxon>Eukaryota</taxon>
        <taxon>Viridiplantae</taxon>
        <taxon>Streptophyta</taxon>
        <taxon>Embryophyta</taxon>
        <taxon>Tracheophyta</taxon>
        <taxon>Spermatophyta</taxon>
        <taxon>Magnoliopsida</taxon>
        <taxon>Liliopsida</taxon>
        <taxon>Poales</taxon>
        <taxon>Poaceae</taxon>
        <taxon>BOP clade</taxon>
        <taxon>Oryzoideae</taxon>
        <taxon>Oryzeae</taxon>
        <taxon>Oryzinae</taxon>
        <taxon>Oryza</taxon>
        <taxon>Oryza sativa</taxon>
    </lineage>
</organism>
<dbReference type="EC" id="1.10.3.2"/>
<dbReference type="EMBL" id="AC105770">
    <property type="protein sequence ID" value="AAU44019.1"/>
    <property type="status" value="ALT_SEQ"/>
    <property type="molecule type" value="Genomic_DNA"/>
</dbReference>
<dbReference type="EMBL" id="AP008211">
    <property type="protein sequence ID" value="BAF17661.1"/>
    <property type="molecule type" value="Genomic_DNA"/>
</dbReference>
<dbReference type="EMBL" id="AP014961">
    <property type="protein sequence ID" value="BAS94388.1"/>
    <property type="molecule type" value="Genomic_DNA"/>
</dbReference>
<dbReference type="EMBL" id="AK068047">
    <property type="status" value="NOT_ANNOTATED_CDS"/>
    <property type="molecule type" value="mRNA"/>
</dbReference>
<dbReference type="SMR" id="P0DKK6"/>
<dbReference type="FunCoup" id="P0DKK6">
    <property type="interactions" value="36"/>
</dbReference>
<dbReference type="STRING" id="39947.P0DKK6"/>
<dbReference type="GlyCosmos" id="P0DKK6">
    <property type="glycosylation" value="14 sites, No reported glycans"/>
</dbReference>
<dbReference type="PaxDb" id="39947-P0DKK6"/>
<dbReference type="EnsemblPlants" id="Os05t0458500-00">
    <property type="protein sequence ID" value="Os05t0458500-00"/>
    <property type="gene ID" value="Os05g0458500"/>
</dbReference>
<dbReference type="EnsemblPlants" id="Os05t0458600-01">
    <property type="protein sequence ID" value="Os05t0458600-01"/>
    <property type="gene ID" value="Os05g0458600"/>
</dbReference>
<dbReference type="GeneID" id="4339004"/>
<dbReference type="Gramene" id="Os05t0458500-00">
    <property type="protein sequence ID" value="Os05t0458500-00"/>
    <property type="gene ID" value="Os05g0458500"/>
</dbReference>
<dbReference type="Gramene" id="Os05t0458600-01">
    <property type="protein sequence ID" value="Os05t0458600-01"/>
    <property type="gene ID" value="Os05g0458600"/>
</dbReference>
<dbReference type="KEGG" id="dosa:Os05g0458600"/>
<dbReference type="KEGG" id="osa:4339003"/>
<dbReference type="KEGG" id="osa:4339004"/>
<dbReference type="InParanoid" id="P0DKK6"/>
<dbReference type="OMA" id="DMGCMPP"/>
<dbReference type="OrthoDB" id="2121828at2759"/>
<dbReference type="Proteomes" id="UP000000763">
    <property type="component" value="Chromosome 5"/>
</dbReference>
<dbReference type="Proteomes" id="UP000059680">
    <property type="component" value="Chromosome 5"/>
</dbReference>
<dbReference type="ExpressionAtlas" id="P0DKK6">
    <property type="expression patterns" value="baseline and differential"/>
</dbReference>
<dbReference type="GO" id="GO:0048046">
    <property type="term" value="C:apoplast"/>
    <property type="evidence" value="ECO:0007669"/>
    <property type="project" value="UniProtKB-SubCell"/>
</dbReference>
<dbReference type="GO" id="GO:0005507">
    <property type="term" value="F:copper ion binding"/>
    <property type="evidence" value="ECO:0007669"/>
    <property type="project" value="InterPro"/>
</dbReference>
<dbReference type="GO" id="GO:0052716">
    <property type="term" value="F:hydroquinone:oxygen oxidoreductase activity"/>
    <property type="evidence" value="ECO:0007669"/>
    <property type="project" value="UniProtKB-EC"/>
</dbReference>
<dbReference type="GO" id="GO:0046274">
    <property type="term" value="P:lignin catabolic process"/>
    <property type="evidence" value="ECO:0007669"/>
    <property type="project" value="UniProtKB-KW"/>
</dbReference>
<dbReference type="CDD" id="cd13849">
    <property type="entry name" value="CuRO_1_LCC_plant"/>
    <property type="match status" value="1"/>
</dbReference>
<dbReference type="CDD" id="cd13875">
    <property type="entry name" value="CuRO_2_LCC_plant"/>
    <property type="match status" value="1"/>
</dbReference>
<dbReference type="CDD" id="cd13897">
    <property type="entry name" value="CuRO_3_LCC_plant"/>
    <property type="match status" value="1"/>
</dbReference>
<dbReference type="FunFam" id="2.60.40.420:FF:000049">
    <property type="entry name" value="Laccase"/>
    <property type="match status" value="1"/>
</dbReference>
<dbReference type="FunFam" id="2.60.40.420:FF:000062">
    <property type="entry name" value="Laccase"/>
    <property type="match status" value="1"/>
</dbReference>
<dbReference type="Gene3D" id="2.60.40.420">
    <property type="entry name" value="Cupredoxins - blue copper proteins"/>
    <property type="match status" value="3"/>
</dbReference>
<dbReference type="InterPro" id="IPR011707">
    <property type="entry name" value="Cu-oxidase-like_N"/>
</dbReference>
<dbReference type="InterPro" id="IPR001117">
    <property type="entry name" value="Cu-oxidase_2nd"/>
</dbReference>
<dbReference type="InterPro" id="IPR011706">
    <property type="entry name" value="Cu-oxidase_C"/>
</dbReference>
<dbReference type="InterPro" id="IPR045087">
    <property type="entry name" value="Cu-oxidase_fam"/>
</dbReference>
<dbReference type="InterPro" id="IPR033138">
    <property type="entry name" value="Cu_oxidase_CS"/>
</dbReference>
<dbReference type="InterPro" id="IPR002355">
    <property type="entry name" value="Cu_oxidase_Cu_BS"/>
</dbReference>
<dbReference type="InterPro" id="IPR008972">
    <property type="entry name" value="Cupredoxin"/>
</dbReference>
<dbReference type="InterPro" id="IPR034288">
    <property type="entry name" value="CuRO_1_LCC"/>
</dbReference>
<dbReference type="InterPro" id="IPR034285">
    <property type="entry name" value="CuRO_2_LCC"/>
</dbReference>
<dbReference type="InterPro" id="IPR034289">
    <property type="entry name" value="CuRO_3_LCC"/>
</dbReference>
<dbReference type="InterPro" id="IPR017761">
    <property type="entry name" value="Laccase"/>
</dbReference>
<dbReference type="NCBIfam" id="TIGR03389">
    <property type="entry name" value="laccase"/>
    <property type="match status" value="1"/>
</dbReference>
<dbReference type="PANTHER" id="PTHR11709:SF383">
    <property type="entry name" value="LACCASE-12"/>
    <property type="match status" value="1"/>
</dbReference>
<dbReference type="PANTHER" id="PTHR11709">
    <property type="entry name" value="MULTI-COPPER OXIDASE"/>
    <property type="match status" value="1"/>
</dbReference>
<dbReference type="Pfam" id="PF00394">
    <property type="entry name" value="Cu-oxidase"/>
    <property type="match status" value="1"/>
</dbReference>
<dbReference type="Pfam" id="PF07731">
    <property type="entry name" value="Cu-oxidase_2"/>
    <property type="match status" value="1"/>
</dbReference>
<dbReference type="Pfam" id="PF07732">
    <property type="entry name" value="Cu-oxidase_3"/>
    <property type="match status" value="1"/>
</dbReference>
<dbReference type="SUPFAM" id="SSF49503">
    <property type="entry name" value="Cupredoxins"/>
    <property type="match status" value="3"/>
</dbReference>
<dbReference type="PROSITE" id="PS00079">
    <property type="entry name" value="MULTICOPPER_OXIDASE1"/>
    <property type="match status" value="1"/>
</dbReference>
<dbReference type="PROSITE" id="PS00080">
    <property type="entry name" value="MULTICOPPER_OXIDASE2"/>
    <property type="match status" value="1"/>
</dbReference>
<evidence type="ECO:0000250" key="1"/>
<evidence type="ECO:0000255" key="2"/>
<evidence type="ECO:0000305" key="3"/>
<protein>
    <recommendedName>
        <fullName>Laccase-13</fullName>
        <ecNumber>1.10.3.2</ecNumber>
    </recommendedName>
    <alternativeName>
        <fullName>Benzenediol:oxygen oxidoreductase 13</fullName>
    </alternativeName>
    <alternativeName>
        <fullName>Diphenol oxidase 13</fullName>
    </alternativeName>
    <alternativeName>
        <fullName>Urishiol oxidase 13</fullName>
    </alternativeName>
</protein>